<proteinExistence type="inferred from homology"/>
<reference key="1">
    <citation type="journal article" date="1993" name="Nature">
        <title>Potential virulence determinants in terminal regions of variola smallpox virus genome.</title>
        <authorList>
            <person name="Massung R.F."/>
            <person name="Esposito J.J."/>
            <person name="Liu L.I."/>
            <person name="Qi J."/>
            <person name="Utterback T.R."/>
            <person name="Knight J.C."/>
            <person name="Aubin L."/>
            <person name="Yuran T.E."/>
            <person name="Parsons J.M."/>
            <person name="Loparev V.N."/>
            <person name="Selivanov N.A."/>
            <person name="Cavallaro K.F."/>
            <person name="Kerlavage A.R."/>
            <person name="Mahy B.W.J."/>
            <person name="Venter J.C."/>
        </authorList>
    </citation>
    <scope>NUCLEOTIDE SEQUENCE [GENOMIC DNA]</scope>
    <source>
        <strain>Bangladesh-1975</strain>
    </source>
</reference>
<feature type="chain" id="PRO_0000448113" description="mRNA-capping enzyme regulatory subunit">
    <location>
        <begin position="1"/>
        <end position="287"/>
    </location>
</feature>
<sequence length="287" mass="33352">MDEIVKNIREGTHVLLPFYETLPELNLSLGKSPLPSLEYGANYFLQISRVNDLNRMPTDMLKLFTHDIMLPESDLDKVYEILKINSVKYYGRSTKADAVVADLSARNKLFKRERDAIKSNNHLTENNLYISDYKMLTFDVFRPLFDFVNEKYCIIKLPTLFGRGVIDTMRIYCSLFKNVRLLKCVSDSWLKDSAIMVASNVCKKNLDLFMSHVKSVTKSSSWKDVNSVQFSILNDPVDTEFINKFLEFSNRVYEALYYVHSLLYSSMTSDSKSIENKHQRRLVKLLL</sequence>
<organismHost>
    <name type="scientific">Homo sapiens</name>
    <name type="common">Human</name>
    <dbReference type="NCBI Taxonomy" id="9606"/>
</organismHost>
<dbReference type="EMBL" id="L22579">
    <property type="protein sequence ID" value="AAA60850.1"/>
    <property type="molecule type" value="Genomic_DNA"/>
</dbReference>
<dbReference type="PIR" id="T28540">
    <property type="entry name" value="T28540"/>
</dbReference>
<dbReference type="RefSeq" id="NP_042146.1">
    <property type="nucleotide sequence ID" value="NC_001611.1"/>
</dbReference>
<dbReference type="SMR" id="P0DSQ6"/>
<dbReference type="GeneID" id="1486476"/>
<dbReference type="KEGG" id="vg:1486476"/>
<dbReference type="Proteomes" id="UP000119805">
    <property type="component" value="Segment"/>
</dbReference>
<dbReference type="GO" id="GO:0044423">
    <property type="term" value="C:virion component"/>
    <property type="evidence" value="ECO:0007669"/>
    <property type="project" value="UniProtKB-KW"/>
</dbReference>
<dbReference type="GO" id="GO:0004482">
    <property type="term" value="F:mRNA 5'-cap (guanine-N7-)-methyltransferase activity"/>
    <property type="evidence" value="ECO:0007669"/>
    <property type="project" value="InterPro"/>
</dbReference>
<dbReference type="GO" id="GO:0006353">
    <property type="term" value="P:DNA-templated transcription termination"/>
    <property type="evidence" value="ECO:0007669"/>
    <property type="project" value="UniProtKB-KW"/>
</dbReference>
<dbReference type="Gene3D" id="3.40.50.11680">
    <property type="entry name" value="Poxvirus mRNA capping enzyme, small subunit"/>
    <property type="match status" value="1"/>
</dbReference>
<dbReference type="InterPro" id="IPR005009">
    <property type="entry name" value="Poxvirus_mRNA-cap_ssu"/>
</dbReference>
<dbReference type="InterPro" id="IPR043096">
    <property type="entry name" value="Poxvirus_mRNA-cap_ssu_sf"/>
</dbReference>
<dbReference type="Pfam" id="PF03341">
    <property type="entry name" value="Pox_mRNA-cap"/>
    <property type="match status" value="1"/>
</dbReference>
<keyword id="KW-0506">mRNA capping</keyword>
<keyword id="KW-0507">mRNA processing</keyword>
<keyword id="KW-0804">Transcription</keyword>
<keyword id="KW-0805">Transcription regulation</keyword>
<keyword id="KW-0806">Transcription termination</keyword>
<keyword id="KW-0946">Virion</keyword>
<protein>
    <recommendedName>
        <fullName>mRNA-capping enzyme regulatory subunit</fullName>
    </recommendedName>
    <alternativeName>
        <fullName>Virus termination factor small subunit</fullName>
        <shortName>VTF small subunit</shortName>
    </alternativeName>
    <alternativeName>
        <fullName>mRNA-capping enzyme 33 kDa subunit</fullName>
    </alternativeName>
    <alternativeName>
        <fullName>mRNA-capping enzyme D12 subunit</fullName>
    </alternativeName>
    <alternativeName>
        <fullName>mRNA-capping enzyme small subunit</fullName>
    </alternativeName>
</protein>
<gene>
    <name type="ORF">D12L</name>
    <name type="ORF">N2L</name>
</gene>
<organism>
    <name type="scientific">Variola virus</name>
    <dbReference type="NCBI Taxonomy" id="10255"/>
    <lineage>
        <taxon>Viruses</taxon>
        <taxon>Varidnaviria</taxon>
        <taxon>Bamfordvirae</taxon>
        <taxon>Nucleocytoviricota</taxon>
        <taxon>Pokkesviricetes</taxon>
        <taxon>Chitovirales</taxon>
        <taxon>Poxviridae</taxon>
        <taxon>Chordopoxvirinae</taxon>
        <taxon>Orthopoxvirus</taxon>
    </lineage>
</organism>
<name>MCES_VARV</name>
<evidence type="ECO:0000250" key="1"/>
<evidence type="ECO:0000305" key="2"/>
<accession>P0DSQ6</accession>
<accession>P33808</accession>
<comment type="function">
    <text evidence="1">Regulatory subunit of the mRNA cap enzyme which stabilizes the catalytic subunit and enhances its methyltransferase activity through an allosteric mechanism. Heterodimeric mRNA capping enzyme catalyzes the linkage of a N7-methyl-guanosine moiety to the first transcribed nucleotide (cap 0 structure), whereas the polymerase associated VP39 is responsible for a second methylation at the 2'-O position of the ribose (cap 1 structure) (By similarity).</text>
</comment>
<comment type="function">
    <text evidence="1">The heterodimeric enzyme is also involved in early viral gene transcription termination and intermediate viral gene transcription initiation. Early gene transcription termination requires the termination factor VTF, the DNA-dependent ATPase NPH-I and the Rap94 subunit of the viral RNA polymerase, as well as the presence of a specific termination motif. Binds, together with RAP94, to the termination motif 5'-UUUUUNU-3' in the nascent early mRNA (By similarity).</text>
</comment>
<comment type="subunit">
    <text evidence="1">Heterodimer of a catalytic and a regulatory subunit. Intrinsic methyltransferase activity of the catalytic subunit is weak and needs to be stimulated 30- to 50-fold by the regulatory subunit, which is itself catalytically inert (By similarity).</text>
</comment>
<comment type="subcellular location">
    <subcellularLocation>
        <location evidence="2">Virion</location>
    </subcellularLocation>
    <text>All the enzymes and other proteins required to synthesize early mRNAs are packaged within the virion core along with the DNA genome.</text>
</comment>
<comment type="similarity">
    <text evidence="2">Belongs to the chordopoxvirinae mRNA-capping enzyme regulatory subunit family.</text>
</comment>